<sequence length="190" mass="20550">MAGERERGGRDRGPREERDSEFVDKLVHINRVAKVVKGGKRFGFAALVVIGDQKGRVGFGHGKAREVPEAIRKATESAKRNLTRVPLREGRTLHHDIAGRHGAGRVYLRAAPAGTGIIAGGPMRAVFETLGIQDVVAKSIGSSNPYNMVRATFDALKHQDSPRSVAARRNIKVSTLQSRRVGGDAEVVAE</sequence>
<keyword id="KW-0687">Ribonucleoprotein</keyword>
<keyword id="KW-0689">Ribosomal protein</keyword>
<keyword id="KW-0694">RNA-binding</keyword>
<keyword id="KW-0699">rRNA-binding</keyword>
<dbReference type="EMBL" id="CP000463">
    <property type="protein sequence ID" value="ABJ07499.1"/>
    <property type="molecule type" value="Genomic_DNA"/>
</dbReference>
<dbReference type="SMR" id="Q07KN5"/>
<dbReference type="STRING" id="316055.RPE_3569"/>
<dbReference type="KEGG" id="rpe:RPE_3569"/>
<dbReference type="eggNOG" id="COG0098">
    <property type="taxonomic scope" value="Bacteria"/>
</dbReference>
<dbReference type="HOGENOM" id="CLU_065898_2_2_5"/>
<dbReference type="OrthoDB" id="9809045at2"/>
<dbReference type="GO" id="GO:0015935">
    <property type="term" value="C:small ribosomal subunit"/>
    <property type="evidence" value="ECO:0007669"/>
    <property type="project" value="InterPro"/>
</dbReference>
<dbReference type="GO" id="GO:0019843">
    <property type="term" value="F:rRNA binding"/>
    <property type="evidence" value="ECO:0007669"/>
    <property type="project" value="UniProtKB-UniRule"/>
</dbReference>
<dbReference type="GO" id="GO:0003735">
    <property type="term" value="F:structural constituent of ribosome"/>
    <property type="evidence" value="ECO:0007669"/>
    <property type="project" value="InterPro"/>
</dbReference>
<dbReference type="GO" id="GO:0006412">
    <property type="term" value="P:translation"/>
    <property type="evidence" value="ECO:0007669"/>
    <property type="project" value="UniProtKB-UniRule"/>
</dbReference>
<dbReference type="FunFam" id="3.30.160.20:FF:000001">
    <property type="entry name" value="30S ribosomal protein S5"/>
    <property type="match status" value="1"/>
</dbReference>
<dbReference type="FunFam" id="3.30.230.10:FF:000002">
    <property type="entry name" value="30S ribosomal protein S5"/>
    <property type="match status" value="1"/>
</dbReference>
<dbReference type="Gene3D" id="3.30.160.20">
    <property type="match status" value="1"/>
</dbReference>
<dbReference type="Gene3D" id="3.30.230.10">
    <property type="match status" value="1"/>
</dbReference>
<dbReference type="HAMAP" id="MF_01307_B">
    <property type="entry name" value="Ribosomal_uS5_B"/>
    <property type="match status" value="1"/>
</dbReference>
<dbReference type="InterPro" id="IPR020568">
    <property type="entry name" value="Ribosomal_Su5_D2-typ_SF"/>
</dbReference>
<dbReference type="InterPro" id="IPR000851">
    <property type="entry name" value="Ribosomal_uS5"/>
</dbReference>
<dbReference type="InterPro" id="IPR005712">
    <property type="entry name" value="Ribosomal_uS5_bac-type"/>
</dbReference>
<dbReference type="InterPro" id="IPR005324">
    <property type="entry name" value="Ribosomal_uS5_C"/>
</dbReference>
<dbReference type="InterPro" id="IPR013810">
    <property type="entry name" value="Ribosomal_uS5_N"/>
</dbReference>
<dbReference type="InterPro" id="IPR018192">
    <property type="entry name" value="Ribosomal_uS5_N_CS"/>
</dbReference>
<dbReference type="InterPro" id="IPR014721">
    <property type="entry name" value="Ribsml_uS5_D2-typ_fold_subgr"/>
</dbReference>
<dbReference type="NCBIfam" id="TIGR01021">
    <property type="entry name" value="rpsE_bact"/>
    <property type="match status" value="1"/>
</dbReference>
<dbReference type="PANTHER" id="PTHR48277">
    <property type="entry name" value="MITOCHONDRIAL RIBOSOMAL PROTEIN S5"/>
    <property type="match status" value="1"/>
</dbReference>
<dbReference type="PANTHER" id="PTHR48277:SF1">
    <property type="entry name" value="MITOCHONDRIAL RIBOSOMAL PROTEIN S5"/>
    <property type="match status" value="1"/>
</dbReference>
<dbReference type="Pfam" id="PF00333">
    <property type="entry name" value="Ribosomal_S5"/>
    <property type="match status" value="1"/>
</dbReference>
<dbReference type="Pfam" id="PF03719">
    <property type="entry name" value="Ribosomal_S5_C"/>
    <property type="match status" value="1"/>
</dbReference>
<dbReference type="SUPFAM" id="SSF54768">
    <property type="entry name" value="dsRNA-binding domain-like"/>
    <property type="match status" value="1"/>
</dbReference>
<dbReference type="SUPFAM" id="SSF54211">
    <property type="entry name" value="Ribosomal protein S5 domain 2-like"/>
    <property type="match status" value="1"/>
</dbReference>
<dbReference type="PROSITE" id="PS00585">
    <property type="entry name" value="RIBOSOMAL_S5"/>
    <property type="match status" value="1"/>
</dbReference>
<dbReference type="PROSITE" id="PS50881">
    <property type="entry name" value="S5_DSRBD"/>
    <property type="match status" value="1"/>
</dbReference>
<feature type="chain" id="PRO_0000323181" description="Small ribosomal subunit protein uS5">
    <location>
        <begin position="1"/>
        <end position="190"/>
    </location>
</feature>
<feature type="domain" description="S5 DRBM" evidence="1">
    <location>
        <begin position="22"/>
        <end position="85"/>
    </location>
</feature>
<accession>Q07KN5</accession>
<reference key="1">
    <citation type="submission" date="2006-09" db="EMBL/GenBank/DDBJ databases">
        <title>Complete sequence of Rhodopseudomonas palustris BisA53.</title>
        <authorList>
            <consortium name="US DOE Joint Genome Institute"/>
            <person name="Copeland A."/>
            <person name="Lucas S."/>
            <person name="Lapidus A."/>
            <person name="Barry K."/>
            <person name="Detter J.C."/>
            <person name="Glavina del Rio T."/>
            <person name="Hammon N."/>
            <person name="Israni S."/>
            <person name="Dalin E."/>
            <person name="Tice H."/>
            <person name="Pitluck S."/>
            <person name="Chain P."/>
            <person name="Malfatti S."/>
            <person name="Shin M."/>
            <person name="Vergez L."/>
            <person name="Schmutz J."/>
            <person name="Larimer F."/>
            <person name="Land M."/>
            <person name="Hauser L."/>
            <person name="Pelletier D.A."/>
            <person name="Kyrpides N."/>
            <person name="Kim E."/>
            <person name="Harwood C.S."/>
            <person name="Oda Y."/>
            <person name="Richardson P."/>
        </authorList>
    </citation>
    <scope>NUCLEOTIDE SEQUENCE [LARGE SCALE GENOMIC DNA]</scope>
    <source>
        <strain>BisA53</strain>
    </source>
</reference>
<proteinExistence type="inferred from homology"/>
<protein>
    <recommendedName>
        <fullName evidence="1">Small ribosomal subunit protein uS5</fullName>
    </recommendedName>
    <alternativeName>
        <fullName evidence="2">30S ribosomal protein S5</fullName>
    </alternativeName>
</protein>
<evidence type="ECO:0000255" key="1">
    <source>
        <dbReference type="HAMAP-Rule" id="MF_01307"/>
    </source>
</evidence>
<evidence type="ECO:0000305" key="2"/>
<gene>
    <name evidence="1" type="primary">rpsE</name>
    <name type="ordered locus">RPE_3569</name>
</gene>
<comment type="function">
    <text evidence="1">With S4 and S12 plays an important role in translational accuracy.</text>
</comment>
<comment type="function">
    <text evidence="1">Located at the back of the 30S subunit body where it stabilizes the conformation of the head with respect to the body.</text>
</comment>
<comment type="subunit">
    <text evidence="1">Part of the 30S ribosomal subunit. Contacts proteins S4 and S8.</text>
</comment>
<comment type="domain">
    <text>The N-terminal domain interacts with the head of the 30S subunit; the C-terminal domain interacts with the body and contacts protein S4. The interaction surface between S4 and S5 is involved in control of translational fidelity.</text>
</comment>
<comment type="similarity">
    <text evidence="1">Belongs to the universal ribosomal protein uS5 family.</text>
</comment>
<organism>
    <name type="scientific">Rhodopseudomonas palustris (strain BisA53)</name>
    <dbReference type="NCBI Taxonomy" id="316055"/>
    <lineage>
        <taxon>Bacteria</taxon>
        <taxon>Pseudomonadati</taxon>
        <taxon>Pseudomonadota</taxon>
        <taxon>Alphaproteobacteria</taxon>
        <taxon>Hyphomicrobiales</taxon>
        <taxon>Nitrobacteraceae</taxon>
        <taxon>Rhodopseudomonas</taxon>
    </lineage>
</organism>
<name>RS5_RHOP5</name>